<feature type="chain" id="PRO_1000059249" description="Phenylalanine--tRNA ligase alpha subunit">
    <location>
        <begin position="1"/>
        <end position="327"/>
    </location>
</feature>
<feature type="binding site" evidence="1">
    <location>
        <position position="252"/>
    </location>
    <ligand>
        <name>Mg(2+)</name>
        <dbReference type="ChEBI" id="CHEBI:18420"/>
        <note>shared with beta subunit</note>
    </ligand>
</feature>
<protein>
    <recommendedName>
        <fullName evidence="1">Phenylalanine--tRNA ligase alpha subunit</fullName>
        <ecNumber evidence="1">6.1.1.20</ecNumber>
    </recommendedName>
    <alternativeName>
        <fullName evidence="1">Phenylalanyl-tRNA synthetase alpha subunit</fullName>
        <shortName evidence="1">PheRS</shortName>
    </alternativeName>
</protein>
<keyword id="KW-0030">Aminoacyl-tRNA synthetase</keyword>
<keyword id="KW-0067">ATP-binding</keyword>
<keyword id="KW-0963">Cytoplasm</keyword>
<keyword id="KW-0436">Ligase</keyword>
<keyword id="KW-0460">Magnesium</keyword>
<keyword id="KW-0479">Metal-binding</keyword>
<keyword id="KW-0547">Nucleotide-binding</keyword>
<keyword id="KW-0648">Protein biosynthesis</keyword>
<gene>
    <name evidence="1" type="primary">pheS</name>
    <name type="ordered locus">YpsIP31758_1716</name>
</gene>
<name>SYFA_YERP3</name>
<evidence type="ECO:0000255" key="1">
    <source>
        <dbReference type="HAMAP-Rule" id="MF_00281"/>
    </source>
</evidence>
<reference key="1">
    <citation type="journal article" date="2007" name="PLoS Genet.">
        <title>The complete genome sequence of Yersinia pseudotuberculosis IP31758, the causative agent of Far East scarlet-like fever.</title>
        <authorList>
            <person name="Eppinger M."/>
            <person name="Rosovitz M.J."/>
            <person name="Fricke W.F."/>
            <person name="Rasko D.A."/>
            <person name="Kokorina G."/>
            <person name="Fayolle C."/>
            <person name="Lindler L.E."/>
            <person name="Carniel E."/>
            <person name="Ravel J."/>
        </authorList>
    </citation>
    <scope>NUCLEOTIDE SEQUENCE [LARGE SCALE GENOMIC DNA]</scope>
    <source>
        <strain>IP 31758</strain>
    </source>
</reference>
<organism>
    <name type="scientific">Yersinia pseudotuberculosis serotype O:1b (strain IP 31758)</name>
    <dbReference type="NCBI Taxonomy" id="349747"/>
    <lineage>
        <taxon>Bacteria</taxon>
        <taxon>Pseudomonadati</taxon>
        <taxon>Pseudomonadota</taxon>
        <taxon>Gammaproteobacteria</taxon>
        <taxon>Enterobacterales</taxon>
        <taxon>Yersiniaceae</taxon>
        <taxon>Yersinia</taxon>
    </lineage>
</organism>
<sequence length="327" mass="37197">MPHLAELVAKAKAAVEDAQDIAALDLVRVEYLGKKGHLTLQMTSLRELPAEERPAAGAVINQAKQEVQEALNARKEKLESAVLNARLAAETIDVSLPGRRMENGGLHPVTRTIERIETFFGELGFSVESGPEIEDDYHNFDALNIPAHHPARADHDTFWFDATRLLRTQTSGVQIRTMQEQQPPIRIIVPGRVYRNDYDQTHTPMFHQMEGLIVDRDISFTNLKGTLHDFLRNFFEEDLQIRFRPSYFPFTEPSAEVDVMGKNGKWLEVLGCGMVHPNVLRNVGIDPEIYSGFAFGMGMERLTMLRYGVTDLRAFFENDLRFLKQFK</sequence>
<accession>A7FHG5</accession>
<dbReference type="EC" id="6.1.1.20" evidence="1"/>
<dbReference type="EMBL" id="CP000720">
    <property type="protein sequence ID" value="ABS46225.1"/>
    <property type="molecule type" value="Genomic_DNA"/>
</dbReference>
<dbReference type="RefSeq" id="WP_011192546.1">
    <property type="nucleotide sequence ID" value="NC_009708.1"/>
</dbReference>
<dbReference type="SMR" id="A7FHG5"/>
<dbReference type="GeneID" id="49785658"/>
<dbReference type="KEGG" id="ypi:YpsIP31758_1716"/>
<dbReference type="HOGENOM" id="CLU_025086_0_1_6"/>
<dbReference type="Proteomes" id="UP000002412">
    <property type="component" value="Chromosome"/>
</dbReference>
<dbReference type="GO" id="GO:0005737">
    <property type="term" value="C:cytoplasm"/>
    <property type="evidence" value="ECO:0007669"/>
    <property type="project" value="UniProtKB-SubCell"/>
</dbReference>
<dbReference type="GO" id="GO:0005524">
    <property type="term" value="F:ATP binding"/>
    <property type="evidence" value="ECO:0007669"/>
    <property type="project" value="UniProtKB-UniRule"/>
</dbReference>
<dbReference type="GO" id="GO:0000287">
    <property type="term" value="F:magnesium ion binding"/>
    <property type="evidence" value="ECO:0007669"/>
    <property type="project" value="UniProtKB-UniRule"/>
</dbReference>
<dbReference type="GO" id="GO:0004826">
    <property type="term" value="F:phenylalanine-tRNA ligase activity"/>
    <property type="evidence" value="ECO:0007669"/>
    <property type="project" value="UniProtKB-UniRule"/>
</dbReference>
<dbReference type="GO" id="GO:0000049">
    <property type="term" value="F:tRNA binding"/>
    <property type="evidence" value="ECO:0007669"/>
    <property type="project" value="InterPro"/>
</dbReference>
<dbReference type="GO" id="GO:0006432">
    <property type="term" value="P:phenylalanyl-tRNA aminoacylation"/>
    <property type="evidence" value="ECO:0007669"/>
    <property type="project" value="UniProtKB-UniRule"/>
</dbReference>
<dbReference type="CDD" id="cd00496">
    <property type="entry name" value="PheRS_alpha_core"/>
    <property type="match status" value="1"/>
</dbReference>
<dbReference type="FunFam" id="3.30.930.10:FF:000003">
    <property type="entry name" value="Phenylalanine--tRNA ligase alpha subunit"/>
    <property type="match status" value="1"/>
</dbReference>
<dbReference type="Gene3D" id="3.30.930.10">
    <property type="entry name" value="Bira Bifunctional Protein, Domain 2"/>
    <property type="match status" value="1"/>
</dbReference>
<dbReference type="HAMAP" id="MF_00281">
    <property type="entry name" value="Phe_tRNA_synth_alpha1"/>
    <property type="match status" value="1"/>
</dbReference>
<dbReference type="InterPro" id="IPR006195">
    <property type="entry name" value="aa-tRNA-synth_II"/>
</dbReference>
<dbReference type="InterPro" id="IPR045864">
    <property type="entry name" value="aa-tRNA-synth_II/BPL/LPL"/>
</dbReference>
<dbReference type="InterPro" id="IPR004529">
    <property type="entry name" value="Phe-tRNA-synth_IIc_asu"/>
</dbReference>
<dbReference type="InterPro" id="IPR004188">
    <property type="entry name" value="Phe-tRNA_ligase_II_N"/>
</dbReference>
<dbReference type="InterPro" id="IPR022911">
    <property type="entry name" value="Phe_tRNA_ligase_alpha1_bac"/>
</dbReference>
<dbReference type="InterPro" id="IPR002319">
    <property type="entry name" value="Phenylalanyl-tRNA_Synthase"/>
</dbReference>
<dbReference type="InterPro" id="IPR010978">
    <property type="entry name" value="tRNA-bd_arm"/>
</dbReference>
<dbReference type="NCBIfam" id="TIGR00468">
    <property type="entry name" value="pheS"/>
    <property type="match status" value="1"/>
</dbReference>
<dbReference type="PANTHER" id="PTHR11538:SF41">
    <property type="entry name" value="PHENYLALANINE--TRNA LIGASE, MITOCHONDRIAL"/>
    <property type="match status" value="1"/>
</dbReference>
<dbReference type="PANTHER" id="PTHR11538">
    <property type="entry name" value="PHENYLALANYL-TRNA SYNTHETASE"/>
    <property type="match status" value="1"/>
</dbReference>
<dbReference type="Pfam" id="PF02912">
    <property type="entry name" value="Phe_tRNA-synt_N"/>
    <property type="match status" value="1"/>
</dbReference>
<dbReference type="Pfam" id="PF01409">
    <property type="entry name" value="tRNA-synt_2d"/>
    <property type="match status" value="1"/>
</dbReference>
<dbReference type="SUPFAM" id="SSF55681">
    <property type="entry name" value="Class II aaRS and biotin synthetases"/>
    <property type="match status" value="1"/>
</dbReference>
<dbReference type="SUPFAM" id="SSF46589">
    <property type="entry name" value="tRNA-binding arm"/>
    <property type="match status" value="1"/>
</dbReference>
<dbReference type="PROSITE" id="PS50862">
    <property type="entry name" value="AA_TRNA_LIGASE_II"/>
    <property type="match status" value="1"/>
</dbReference>
<comment type="catalytic activity">
    <reaction evidence="1">
        <text>tRNA(Phe) + L-phenylalanine + ATP = L-phenylalanyl-tRNA(Phe) + AMP + diphosphate + H(+)</text>
        <dbReference type="Rhea" id="RHEA:19413"/>
        <dbReference type="Rhea" id="RHEA-COMP:9668"/>
        <dbReference type="Rhea" id="RHEA-COMP:9699"/>
        <dbReference type="ChEBI" id="CHEBI:15378"/>
        <dbReference type="ChEBI" id="CHEBI:30616"/>
        <dbReference type="ChEBI" id="CHEBI:33019"/>
        <dbReference type="ChEBI" id="CHEBI:58095"/>
        <dbReference type="ChEBI" id="CHEBI:78442"/>
        <dbReference type="ChEBI" id="CHEBI:78531"/>
        <dbReference type="ChEBI" id="CHEBI:456215"/>
        <dbReference type="EC" id="6.1.1.20"/>
    </reaction>
</comment>
<comment type="cofactor">
    <cofactor evidence="1">
        <name>Mg(2+)</name>
        <dbReference type="ChEBI" id="CHEBI:18420"/>
    </cofactor>
    <text evidence="1">Binds 2 magnesium ions per tetramer.</text>
</comment>
<comment type="subunit">
    <text evidence="1">Tetramer of two alpha and two beta subunits.</text>
</comment>
<comment type="subcellular location">
    <subcellularLocation>
        <location evidence="1">Cytoplasm</location>
    </subcellularLocation>
</comment>
<comment type="similarity">
    <text evidence="1">Belongs to the class-II aminoacyl-tRNA synthetase family. Phe-tRNA synthetase alpha subunit type 1 subfamily.</text>
</comment>
<proteinExistence type="inferred from homology"/>